<reference key="1">
    <citation type="submission" date="2006-02" db="EMBL/GenBank/DDBJ databases">
        <title>Complete sequence of chromosome of Jannaschia sp. CCS1.</title>
        <authorList>
            <consortium name="US DOE Joint Genome Institute"/>
            <person name="Copeland A."/>
            <person name="Lucas S."/>
            <person name="Lapidus A."/>
            <person name="Barry K."/>
            <person name="Detter J.C."/>
            <person name="Glavina del Rio T."/>
            <person name="Hammon N."/>
            <person name="Israni S."/>
            <person name="Pitluck S."/>
            <person name="Brettin T."/>
            <person name="Bruce D."/>
            <person name="Han C."/>
            <person name="Tapia R."/>
            <person name="Gilna P."/>
            <person name="Chertkov O."/>
            <person name="Saunders E."/>
            <person name="Schmutz J."/>
            <person name="Larimer F."/>
            <person name="Land M."/>
            <person name="Kyrpides N."/>
            <person name="Lykidis A."/>
            <person name="Moran M.A."/>
            <person name="Belas R."/>
            <person name="Ye W."/>
            <person name="Buchan A."/>
            <person name="Gonzalez J.M."/>
            <person name="Schell M.A."/>
            <person name="Richardson P."/>
        </authorList>
    </citation>
    <scope>NUCLEOTIDE SEQUENCE [LARGE SCALE GENOMIC DNA]</scope>
    <source>
        <strain>CCS1</strain>
    </source>
</reference>
<keyword id="KW-1185">Reference proteome</keyword>
<name>Y2882_JANSC</name>
<gene>
    <name type="ordered locus">Jann_2882</name>
</gene>
<organism>
    <name type="scientific">Jannaschia sp. (strain CCS1)</name>
    <dbReference type="NCBI Taxonomy" id="290400"/>
    <lineage>
        <taxon>Bacteria</taxon>
        <taxon>Pseudomonadati</taxon>
        <taxon>Pseudomonadota</taxon>
        <taxon>Alphaproteobacteria</taxon>
        <taxon>Rhodobacterales</taxon>
        <taxon>Roseobacteraceae</taxon>
        <taxon>Jannaschia</taxon>
    </lineage>
</organism>
<evidence type="ECO:0000255" key="1">
    <source>
        <dbReference type="HAMAP-Rule" id="MF_00678"/>
    </source>
</evidence>
<dbReference type="EMBL" id="CP000264">
    <property type="protein sequence ID" value="ABD55799.1"/>
    <property type="molecule type" value="Genomic_DNA"/>
</dbReference>
<dbReference type="RefSeq" id="WP_011456003.1">
    <property type="nucleotide sequence ID" value="NC_007802.1"/>
</dbReference>
<dbReference type="STRING" id="290400.Jann_2882"/>
<dbReference type="KEGG" id="jan:Jann_2882"/>
<dbReference type="eggNOG" id="COG5328">
    <property type="taxonomic scope" value="Bacteria"/>
</dbReference>
<dbReference type="HOGENOM" id="CLU_112904_0_0_5"/>
<dbReference type="OrthoDB" id="9798434at2"/>
<dbReference type="Proteomes" id="UP000008326">
    <property type="component" value="Chromosome"/>
</dbReference>
<dbReference type="HAMAP" id="MF_00678">
    <property type="entry name" value="UPF0262"/>
    <property type="match status" value="1"/>
</dbReference>
<dbReference type="InterPro" id="IPR008321">
    <property type="entry name" value="UCP032146"/>
</dbReference>
<dbReference type="NCBIfam" id="NF002769">
    <property type="entry name" value="PRK02853.1"/>
    <property type="match status" value="1"/>
</dbReference>
<dbReference type="Pfam" id="PF06793">
    <property type="entry name" value="UPF0262"/>
    <property type="match status" value="1"/>
</dbReference>
<dbReference type="PIRSF" id="PIRSF032146">
    <property type="entry name" value="UCP032146"/>
    <property type="match status" value="1"/>
</dbReference>
<accession>Q28NB3</accession>
<proteinExistence type="inferred from homology"/>
<feature type="chain" id="PRO_0000314196" description="UPF0262 protein Jann_2882">
    <location>
        <begin position="1"/>
        <end position="156"/>
    </location>
</feature>
<protein>
    <recommendedName>
        <fullName evidence="1">UPF0262 protein Jann_2882</fullName>
    </recommendedName>
</protein>
<sequence>MMHICHIEIDTQGLPAPTPEIEQERKVAIFDLLEENTFTLPHEDAPSGPYRLSLAIREKRLVFDIDTEDGAEAAEFHLSLAPFRQTVKDYWQICEAYFDAVKKLPPSQIEAIDMARRGIHNEGARLLQERLEGKAEIDTDTARRLFTLICVLHFGA</sequence>
<comment type="similarity">
    <text evidence="1">Belongs to the UPF0262 family.</text>
</comment>